<proteinExistence type="inferred from homology"/>
<reference key="1">
    <citation type="journal article" date="1998" name="Science">
        <title>Complete genome sequence of Treponema pallidum, the syphilis spirochete.</title>
        <authorList>
            <person name="Fraser C.M."/>
            <person name="Norris S.J."/>
            <person name="Weinstock G.M."/>
            <person name="White O."/>
            <person name="Sutton G.G."/>
            <person name="Dodson R.J."/>
            <person name="Gwinn M.L."/>
            <person name="Hickey E.K."/>
            <person name="Clayton R.A."/>
            <person name="Ketchum K.A."/>
            <person name="Sodergren E."/>
            <person name="Hardham J.M."/>
            <person name="McLeod M.P."/>
            <person name="Salzberg S.L."/>
            <person name="Peterson J.D."/>
            <person name="Khalak H.G."/>
            <person name="Richardson D.L."/>
            <person name="Howell J.K."/>
            <person name="Chidambaram M."/>
            <person name="Utterback T.R."/>
            <person name="McDonald L.A."/>
            <person name="Artiach P."/>
            <person name="Bowman C."/>
            <person name="Cotton M.D."/>
            <person name="Fujii C."/>
            <person name="Garland S.A."/>
            <person name="Hatch B."/>
            <person name="Horst K."/>
            <person name="Roberts K.M."/>
            <person name="Sandusky M."/>
            <person name="Weidman J.F."/>
            <person name="Smith H.O."/>
            <person name="Venter J.C."/>
        </authorList>
    </citation>
    <scope>NUCLEOTIDE SEQUENCE [LARGE SCALE GENOMIC DNA]</scope>
    <source>
        <strain>Nichols</strain>
    </source>
</reference>
<keyword id="KW-1185">Reference proteome</keyword>
<keyword id="KW-0732">Signal</keyword>
<evidence type="ECO:0000255" key="1"/>
<evidence type="ECO:0000256" key="2">
    <source>
        <dbReference type="SAM" id="MobiDB-lite"/>
    </source>
</evidence>
<gene>
    <name type="ordered locus">TP_0761</name>
</gene>
<name>Y761_TREPA</name>
<sequence length="292" mass="32411">MNSNSNKKRDPARFPAGVAQGCSTTRAGDLKHRRKHPFEKFFAQNSALFAQRFPDLARALTLPNEQLLQRIPPDYLLAAAHDGDATLAVRGTYLHSKYRPRQEAARLISQDFFTHAIAKGGYVGAGLGLGYVAELYAQQHPTHTVVLIEPDIFVFLLFLASRPLTPLLRHERLKILPAQTVPDVLQFLRATGDVSLPLFHFLPAQELNTAWFHDFTQAHRHATAQAETNKQTLQRFGPLWIRNTIKNAAQLCVRTPVNALRNCAAGSTALIIAGGPGVDASISFLPYLKKKH</sequence>
<dbReference type="EMBL" id="AE000520">
    <property type="protein sequence ID" value="AAC65732.1"/>
    <property type="molecule type" value="Genomic_DNA"/>
</dbReference>
<dbReference type="PIR" id="D71285">
    <property type="entry name" value="D71285"/>
</dbReference>
<dbReference type="RefSeq" id="WP_010882206.1">
    <property type="nucleotide sequence ID" value="NC_021490.2"/>
</dbReference>
<dbReference type="SMR" id="O83742"/>
<dbReference type="IntAct" id="O83742">
    <property type="interactions" value="2"/>
</dbReference>
<dbReference type="STRING" id="243276.TP_0761"/>
<dbReference type="EnsemblBacteria" id="AAC65732">
    <property type="protein sequence ID" value="AAC65732"/>
    <property type="gene ID" value="TP_0761"/>
</dbReference>
<dbReference type="KEGG" id="tpa:TP_0761"/>
<dbReference type="KEGG" id="tpw:TPANIC_0761"/>
<dbReference type="eggNOG" id="COG2604">
    <property type="taxonomic scope" value="Bacteria"/>
</dbReference>
<dbReference type="HOGENOM" id="CLU_952972_0_0_12"/>
<dbReference type="OrthoDB" id="5458680at2"/>
<dbReference type="Proteomes" id="UP000000811">
    <property type="component" value="Chromosome"/>
</dbReference>
<dbReference type="PANTHER" id="PTHR41786:SF1">
    <property type="entry name" value="6-HYDROXYMETHYLPTERIN DIPHOSPHOKINASE MPTE-LIKE DOMAIN-CONTAINING PROTEIN"/>
    <property type="match status" value="1"/>
</dbReference>
<dbReference type="PANTHER" id="PTHR41786">
    <property type="entry name" value="MOTILITY ACCESSORY FACTOR MAF"/>
    <property type="match status" value="1"/>
</dbReference>
<accession>O83742</accession>
<feature type="signal peptide" evidence="1">
    <location>
        <begin position="1"/>
        <end position="21"/>
    </location>
</feature>
<feature type="chain" id="PRO_0000014259" description="Uncharacterized protein TP_0761">
    <location>
        <begin position="22"/>
        <end position="292"/>
    </location>
</feature>
<feature type="region of interest" description="Disordered" evidence="2">
    <location>
        <begin position="1"/>
        <end position="30"/>
    </location>
</feature>
<protein>
    <recommendedName>
        <fullName>Uncharacterized protein TP_0761</fullName>
    </recommendedName>
</protein>
<organism>
    <name type="scientific">Treponema pallidum (strain Nichols)</name>
    <dbReference type="NCBI Taxonomy" id="243276"/>
    <lineage>
        <taxon>Bacteria</taxon>
        <taxon>Pseudomonadati</taxon>
        <taxon>Spirochaetota</taxon>
        <taxon>Spirochaetia</taxon>
        <taxon>Spirochaetales</taxon>
        <taxon>Treponemataceae</taxon>
        <taxon>Treponema</taxon>
    </lineage>
</organism>